<protein>
    <recommendedName>
        <fullName>Putative protein FAR1-RELATED SEQUENCE 10</fullName>
    </recommendedName>
</protein>
<keyword id="KW-0479">Metal-binding</keyword>
<keyword id="KW-1185">Reference proteome</keyword>
<keyword id="KW-0862">Zinc</keyword>
<keyword id="KW-0863">Zinc-finger</keyword>
<dbReference type="EMBL" id="AF262043">
    <property type="protein sequence ID" value="AAF88018.1"/>
    <property type="status" value="ALT_SEQ"/>
    <property type="molecule type" value="Genomic_DNA"/>
</dbReference>
<dbReference type="EMBL" id="CP002688">
    <property type="protein sequence ID" value="AED93811.1"/>
    <property type="molecule type" value="Genomic_DNA"/>
</dbReference>
<dbReference type="RefSeq" id="NP_198205.2">
    <property type="nucleotide sequence ID" value="NM_122736.2"/>
</dbReference>
<dbReference type="FunCoup" id="Q9LKR4">
    <property type="interactions" value="97"/>
</dbReference>
<dbReference type="STRING" id="3702.Q9LKR4"/>
<dbReference type="PaxDb" id="3702-AT5G28530.1"/>
<dbReference type="ProteomicsDB" id="230530"/>
<dbReference type="EnsemblPlants" id="AT5G28530.1">
    <property type="protein sequence ID" value="AT5G28530.1"/>
    <property type="gene ID" value="AT5G28530"/>
</dbReference>
<dbReference type="GeneID" id="832948"/>
<dbReference type="Gramene" id="AT5G28530.1">
    <property type="protein sequence ID" value="AT5G28530.1"/>
    <property type="gene ID" value="AT5G28530"/>
</dbReference>
<dbReference type="KEGG" id="ath:AT5G28530"/>
<dbReference type="Araport" id="AT5G28530"/>
<dbReference type="TAIR" id="AT5G28530">
    <property type="gene designation" value="FRS10"/>
</dbReference>
<dbReference type="eggNOG" id="ENOG502QR1G">
    <property type="taxonomic scope" value="Eukaryota"/>
</dbReference>
<dbReference type="HOGENOM" id="CLU_008459_12_2_1"/>
<dbReference type="InParanoid" id="Q9LKR4"/>
<dbReference type="OMA" id="NEEIHCS"/>
<dbReference type="OrthoDB" id="591056at2759"/>
<dbReference type="PhylomeDB" id="Q9LKR4"/>
<dbReference type="PRO" id="PR:Q9LKR4"/>
<dbReference type="Proteomes" id="UP000006548">
    <property type="component" value="Chromosome 5"/>
</dbReference>
<dbReference type="ExpressionAtlas" id="Q9LKR4">
    <property type="expression patterns" value="baseline and differential"/>
</dbReference>
<dbReference type="GO" id="GO:0008270">
    <property type="term" value="F:zinc ion binding"/>
    <property type="evidence" value="ECO:0007669"/>
    <property type="project" value="UniProtKB-KW"/>
</dbReference>
<dbReference type="GO" id="GO:0006355">
    <property type="term" value="P:regulation of DNA-templated transcription"/>
    <property type="evidence" value="ECO:0007669"/>
    <property type="project" value="InterPro"/>
</dbReference>
<dbReference type="InterPro" id="IPR004330">
    <property type="entry name" value="FAR1_DNA_bnd_dom"/>
</dbReference>
<dbReference type="InterPro" id="IPR031052">
    <property type="entry name" value="FHY3/FAR1"/>
</dbReference>
<dbReference type="InterPro" id="IPR018289">
    <property type="entry name" value="MULE_transposase_dom"/>
</dbReference>
<dbReference type="InterPro" id="IPR006564">
    <property type="entry name" value="Znf_PMZ"/>
</dbReference>
<dbReference type="InterPro" id="IPR007527">
    <property type="entry name" value="Znf_SWIM"/>
</dbReference>
<dbReference type="PANTHER" id="PTHR31669">
    <property type="entry name" value="PROTEIN FAR1-RELATED SEQUENCE 10-RELATED"/>
    <property type="match status" value="1"/>
</dbReference>
<dbReference type="PANTHER" id="PTHR31669:SF174">
    <property type="entry name" value="PROTEIN FAR1-RELATED SEQUENCE 10-RELATED"/>
    <property type="match status" value="1"/>
</dbReference>
<dbReference type="Pfam" id="PF03101">
    <property type="entry name" value="FAR1"/>
    <property type="match status" value="1"/>
</dbReference>
<dbReference type="Pfam" id="PF10551">
    <property type="entry name" value="MULE"/>
    <property type="match status" value="1"/>
</dbReference>
<dbReference type="Pfam" id="PF04434">
    <property type="entry name" value="SWIM"/>
    <property type="match status" value="1"/>
</dbReference>
<dbReference type="SMART" id="SM00575">
    <property type="entry name" value="ZnF_PMZ"/>
    <property type="match status" value="1"/>
</dbReference>
<dbReference type="PROSITE" id="PS50966">
    <property type="entry name" value="ZF_SWIM"/>
    <property type="match status" value="1"/>
</dbReference>
<gene>
    <name type="primary">FRS10</name>
    <name type="ordered locus">At5g28530</name>
    <name type="ORF">T26D3.9</name>
</gene>
<organism>
    <name type="scientific">Arabidopsis thaliana</name>
    <name type="common">Mouse-ear cress</name>
    <dbReference type="NCBI Taxonomy" id="3702"/>
    <lineage>
        <taxon>Eukaryota</taxon>
        <taxon>Viridiplantae</taxon>
        <taxon>Streptophyta</taxon>
        <taxon>Embryophyta</taxon>
        <taxon>Tracheophyta</taxon>
        <taxon>Spermatophyta</taxon>
        <taxon>Magnoliopsida</taxon>
        <taxon>eudicotyledons</taxon>
        <taxon>Gunneridae</taxon>
        <taxon>Pentapetalae</taxon>
        <taxon>rosids</taxon>
        <taxon>malvids</taxon>
        <taxon>Brassicales</taxon>
        <taxon>Brassicaceae</taxon>
        <taxon>Camelineae</taxon>
        <taxon>Arabidopsis</taxon>
    </lineage>
</organism>
<evidence type="ECO:0000255" key="1">
    <source>
        <dbReference type="PROSITE-ProRule" id="PRU00325"/>
    </source>
</evidence>
<evidence type="ECO:0000305" key="2"/>
<reference key="1">
    <citation type="journal article" date="2000" name="Nature">
        <title>Sequence and analysis of chromosome 5 of the plant Arabidopsis thaliana.</title>
        <authorList>
            <person name="Tabata S."/>
            <person name="Kaneko T."/>
            <person name="Nakamura Y."/>
            <person name="Kotani H."/>
            <person name="Kato T."/>
            <person name="Asamizu E."/>
            <person name="Miyajima N."/>
            <person name="Sasamoto S."/>
            <person name="Kimura T."/>
            <person name="Hosouchi T."/>
            <person name="Kawashima K."/>
            <person name="Kohara M."/>
            <person name="Matsumoto M."/>
            <person name="Matsuno A."/>
            <person name="Muraki A."/>
            <person name="Nakayama S."/>
            <person name="Nakazaki N."/>
            <person name="Naruo K."/>
            <person name="Okumura S."/>
            <person name="Shinpo S."/>
            <person name="Takeuchi C."/>
            <person name="Wada T."/>
            <person name="Watanabe A."/>
            <person name="Yamada M."/>
            <person name="Yasuda M."/>
            <person name="Sato S."/>
            <person name="de la Bastide M."/>
            <person name="Huang E."/>
            <person name="Spiegel L."/>
            <person name="Gnoj L."/>
            <person name="O'Shaughnessy A."/>
            <person name="Preston R."/>
            <person name="Habermann K."/>
            <person name="Murray J."/>
            <person name="Johnson D."/>
            <person name="Rohlfing T."/>
            <person name="Nelson J."/>
            <person name="Stoneking T."/>
            <person name="Pepin K."/>
            <person name="Spieth J."/>
            <person name="Sekhon M."/>
            <person name="Armstrong J."/>
            <person name="Becker M."/>
            <person name="Belter E."/>
            <person name="Cordum H."/>
            <person name="Cordes M."/>
            <person name="Courtney L."/>
            <person name="Courtney W."/>
            <person name="Dante M."/>
            <person name="Du H."/>
            <person name="Edwards J."/>
            <person name="Fryman J."/>
            <person name="Haakensen B."/>
            <person name="Lamar E."/>
            <person name="Latreille P."/>
            <person name="Leonard S."/>
            <person name="Meyer R."/>
            <person name="Mulvaney E."/>
            <person name="Ozersky P."/>
            <person name="Riley A."/>
            <person name="Strowmatt C."/>
            <person name="Wagner-McPherson C."/>
            <person name="Wollam A."/>
            <person name="Yoakum M."/>
            <person name="Bell M."/>
            <person name="Dedhia N."/>
            <person name="Parnell L."/>
            <person name="Shah R."/>
            <person name="Rodriguez M."/>
            <person name="Hoon See L."/>
            <person name="Vil D."/>
            <person name="Baker J."/>
            <person name="Kirchoff K."/>
            <person name="Toth K."/>
            <person name="King L."/>
            <person name="Bahret A."/>
            <person name="Miller B."/>
            <person name="Marra M.A."/>
            <person name="Martienssen R."/>
            <person name="McCombie W.R."/>
            <person name="Wilson R.K."/>
            <person name="Murphy G."/>
            <person name="Bancroft I."/>
            <person name="Volckaert G."/>
            <person name="Wambutt R."/>
            <person name="Duesterhoeft A."/>
            <person name="Stiekema W."/>
            <person name="Pohl T."/>
            <person name="Entian K.-D."/>
            <person name="Terryn N."/>
            <person name="Hartley N."/>
            <person name="Bent E."/>
            <person name="Johnson S."/>
            <person name="Langham S.-A."/>
            <person name="McCullagh B."/>
            <person name="Robben J."/>
            <person name="Grymonprez B."/>
            <person name="Zimmermann W."/>
            <person name="Ramsperger U."/>
            <person name="Wedler H."/>
            <person name="Balke K."/>
            <person name="Wedler E."/>
            <person name="Peters S."/>
            <person name="van Staveren M."/>
            <person name="Dirkse W."/>
            <person name="Mooijman P."/>
            <person name="Klein Lankhorst R."/>
            <person name="Weitzenegger T."/>
            <person name="Bothe G."/>
            <person name="Rose M."/>
            <person name="Hauf J."/>
            <person name="Berneiser S."/>
            <person name="Hempel S."/>
            <person name="Feldpausch M."/>
            <person name="Lamberth S."/>
            <person name="Villarroel R."/>
            <person name="Gielen J."/>
            <person name="Ardiles W."/>
            <person name="Bents O."/>
            <person name="Lemcke K."/>
            <person name="Kolesov G."/>
            <person name="Mayer K.F.X."/>
            <person name="Rudd S."/>
            <person name="Schoof H."/>
            <person name="Schueller C."/>
            <person name="Zaccaria P."/>
            <person name="Mewes H.-W."/>
            <person name="Bevan M."/>
            <person name="Fransz P.F."/>
        </authorList>
    </citation>
    <scope>NUCLEOTIDE SEQUENCE [LARGE SCALE GENOMIC DNA]</scope>
    <source>
        <strain>cv. Columbia</strain>
    </source>
</reference>
<reference key="2">
    <citation type="journal article" date="2017" name="Plant J.">
        <title>Araport11: a complete reannotation of the Arabidopsis thaliana reference genome.</title>
        <authorList>
            <person name="Cheng C.Y."/>
            <person name="Krishnakumar V."/>
            <person name="Chan A.P."/>
            <person name="Thibaud-Nissen F."/>
            <person name="Schobel S."/>
            <person name="Town C.D."/>
        </authorList>
    </citation>
    <scope>GENOME REANNOTATION</scope>
    <source>
        <strain>cv. Columbia</strain>
    </source>
</reference>
<reference key="3">
    <citation type="journal article" date="2004" name="Plant Physiol.">
        <title>Arabidopsis FHY3/FAR1 gene family and distinct roles of its members in light control of Arabidopsis development.</title>
        <authorList>
            <person name="Lin R."/>
            <person name="Wang H."/>
        </authorList>
    </citation>
    <scope>GENE FAMILY</scope>
    <scope>NOMENCLATURE</scope>
</reference>
<proteinExistence type="evidence at transcript level"/>
<comment type="similarity">
    <text evidence="2">Belongs to the FHY3/FAR1 family.</text>
</comment>
<comment type="sequence caution" evidence="2">
    <conflict type="erroneous gene model prediction">
        <sequence resource="EMBL-CDS" id="AAF88018"/>
    </conflict>
</comment>
<feature type="chain" id="PRO_0000363488" description="Putative protein FAR1-RELATED SEQUENCE 10">
    <location>
        <begin position="1"/>
        <end position="685"/>
    </location>
</feature>
<feature type="domain" description="FAR1">
    <location>
        <begin position="69"/>
        <end position="161"/>
    </location>
</feature>
<feature type="domain" description="MULE">
    <location>
        <begin position="292"/>
        <end position="388"/>
    </location>
</feature>
<feature type="zinc finger region" description="SWIM-type" evidence="1">
    <location>
        <begin position="565"/>
        <end position="603"/>
    </location>
</feature>
<accession>Q9LKR4</accession>
<name>FRS10_ARATH</name>
<sequence>MALKPLNNIWIRRQQCPCGDWKCYIRLEEDESTITKSEIESTPTPTSQYDTVFTPYVGQIFTTDDEAFEYYSTFARKSGFSIRKARSTESQNLGVYRRDFVCYRSGFNQPRKKANVEHPRERKSVRCGCDGKLYLTKEVVDGVSHWYVSQFSNVHNHELLEDDQVRLLPAYRKIQQSDQERILLLSKAGFPVNRIVKLLELEKGVVSGQLPFIEKDVRNFVRACKKSVQENDAFMTEKRESDTLELLECCKGLAERDMDFVYDCTSDENQKVENIAWAYGDSVRGYSLFGDVVVFDTSYRSVPYGLLLGVFFGIDNNGKAMLLGCVLLQDESCRSFTWALQTFVRFMRGRHPQTILTDIDTGLKDAIGREMPNTNHVVFMSHIVSKLASWFSQTLGSHYEEFRAGFDMLCRAGNVDEFEQQWDLLVTRFGLVPDRHAALLYSCRASWLPCCIREHFVAQTMTSEFNLSIDSFLKRVVDGATCMQLLLEESALQVSAAASLAKQILPRFTYPSLKTCMPMEDHARGILTPYAFSVLQNEMVLSVQYAVAEMANGPFIVHHYKKMEGECCVIWNPENEEIQCSCKEFEHSGILCRHTLRVLTVKNCFHIPEQYFLLRWRQESPHVATENQNGQGIGDDSAQTFHSLTETLLTESMISKDRLDYANQELSLLIDRVRNTAPANCLYQP</sequence>